<protein>
    <recommendedName>
        <fullName evidence="9">Extracellular matrix organizing protein FRAS1</fullName>
    </recommendedName>
</protein>
<reference key="1">
    <citation type="journal article" date="2003" name="Nat. Genet.">
        <title>Fras1 deficiency results in cryptophthalmos, renal agenesis and blebbed phenotype in mice.</title>
        <authorList>
            <person name="Vrontou S."/>
            <person name="Petrou P."/>
            <person name="Meyer B.I."/>
            <person name="Vassilis K."/>
            <person name="Galanopoulos K."/>
            <person name="Imai K."/>
            <person name="Yanagi M."/>
            <person name="Chowdhury K."/>
            <person name="Scambler P.J."/>
            <person name="Chalepakis G."/>
        </authorList>
    </citation>
    <scope>NUCLEOTIDE SEQUENCE [MRNA]</scope>
    <scope>DEVELOPMENTAL STAGE</scope>
    <scope>DISEASE</scope>
    <source>
        <strain>NMRI</strain>
        <tissue>Brain</tissue>
    </source>
</reference>
<reference key="2">
    <citation type="journal article" date="2009" name="PLoS Biol.">
        <title>Lineage-specific biology revealed by a finished genome assembly of the mouse.</title>
        <authorList>
            <person name="Church D.M."/>
            <person name="Goodstadt L."/>
            <person name="Hillier L.W."/>
            <person name="Zody M.C."/>
            <person name="Goldstein S."/>
            <person name="She X."/>
            <person name="Bult C.J."/>
            <person name="Agarwala R."/>
            <person name="Cherry J.L."/>
            <person name="DiCuccio M."/>
            <person name="Hlavina W."/>
            <person name="Kapustin Y."/>
            <person name="Meric P."/>
            <person name="Maglott D."/>
            <person name="Birtle Z."/>
            <person name="Marques A.C."/>
            <person name="Graves T."/>
            <person name="Zhou S."/>
            <person name="Teague B."/>
            <person name="Potamousis K."/>
            <person name="Churas C."/>
            <person name="Place M."/>
            <person name="Herschleb J."/>
            <person name="Runnheim R."/>
            <person name="Forrest D."/>
            <person name="Amos-Landgraf J."/>
            <person name="Schwartz D.C."/>
            <person name="Cheng Z."/>
            <person name="Lindblad-Toh K."/>
            <person name="Eichler E.E."/>
            <person name="Ponting C.P."/>
        </authorList>
    </citation>
    <scope>NUCLEOTIDE SEQUENCE [LARGE SCALE GENOMIC DNA]</scope>
    <source>
        <strain>C57BL/6J</strain>
    </source>
</reference>
<reference key="3">
    <citation type="journal article" date="2003" name="DNA Res.">
        <title>Prediction of the coding sequences of mouse homologues of KIAA gene: II. The complete nucleotide sequences of 400 mouse KIAA-homologous cDNAs identified by screening of terminal sequences of cDNA clones randomly sampled from size-fractionated libraries.</title>
        <authorList>
            <person name="Okazaki N."/>
            <person name="Kikuno R."/>
            <person name="Ohara R."/>
            <person name="Inamoto S."/>
            <person name="Aizawa H."/>
            <person name="Yuasa S."/>
            <person name="Nakajima D."/>
            <person name="Nagase T."/>
            <person name="Ohara O."/>
            <person name="Koga H."/>
        </authorList>
    </citation>
    <scope>NUCLEOTIDE SEQUENCE [LARGE SCALE MRNA] OF 2283-4010</scope>
    <source>
        <tissue>Brain</tissue>
    </source>
</reference>
<reference key="4">
    <citation type="journal article" date="2005" name="Science">
        <title>The transcriptional landscape of the mammalian genome.</title>
        <authorList>
            <person name="Carninci P."/>
            <person name="Kasukawa T."/>
            <person name="Katayama S."/>
            <person name="Gough J."/>
            <person name="Frith M.C."/>
            <person name="Maeda N."/>
            <person name="Oyama R."/>
            <person name="Ravasi T."/>
            <person name="Lenhard B."/>
            <person name="Wells C."/>
            <person name="Kodzius R."/>
            <person name="Shimokawa K."/>
            <person name="Bajic V.B."/>
            <person name="Brenner S.E."/>
            <person name="Batalov S."/>
            <person name="Forrest A.R."/>
            <person name="Zavolan M."/>
            <person name="Davis M.J."/>
            <person name="Wilming L.G."/>
            <person name="Aidinis V."/>
            <person name="Allen J.E."/>
            <person name="Ambesi-Impiombato A."/>
            <person name="Apweiler R."/>
            <person name="Aturaliya R.N."/>
            <person name="Bailey T.L."/>
            <person name="Bansal M."/>
            <person name="Baxter L."/>
            <person name="Beisel K.W."/>
            <person name="Bersano T."/>
            <person name="Bono H."/>
            <person name="Chalk A.M."/>
            <person name="Chiu K.P."/>
            <person name="Choudhary V."/>
            <person name="Christoffels A."/>
            <person name="Clutterbuck D.R."/>
            <person name="Crowe M.L."/>
            <person name="Dalla E."/>
            <person name="Dalrymple B.P."/>
            <person name="de Bono B."/>
            <person name="Della Gatta G."/>
            <person name="di Bernardo D."/>
            <person name="Down T."/>
            <person name="Engstrom P."/>
            <person name="Fagiolini M."/>
            <person name="Faulkner G."/>
            <person name="Fletcher C.F."/>
            <person name="Fukushima T."/>
            <person name="Furuno M."/>
            <person name="Futaki S."/>
            <person name="Gariboldi M."/>
            <person name="Georgii-Hemming P."/>
            <person name="Gingeras T.R."/>
            <person name="Gojobori T."/>
            <person name="Green R.E."/>
            <person name="Gustincich S."/>
            <person name="Harbers M."/>
            <person name="Hayashi Y."/>
            <person name="Hensch T.K."/>
            <person name="Hirokawa N."/>
            <person name="Hill D."/>
            <person name="Huminiecki L."/>
            <person name="Iacono M."/>
            <person name="Ikeo K."/>
            <person name="Iwama A."/>
            <person name="Ishikawa T."/>
            <person name="Jakt M."/>
            <person name="Kanapin A."/>
            <person name="Katoh M."/>
            <person name="Kawasawa Y."/>
            <person name="Kelso J."/>
            <person name="Kitamura H."/>
            <person name="Kitano H."/>
            <person name="Kollias G."/>
            <person name="Krishnan S.P."/>
            <person name="Kruger A."/>
            <person name="Kummerfeld S.K."/>
            <person name="Kurochkin I.V."/>
            <person name="Lareau L.F."/>
            <person name="Lazarevic D."/>
            <person name="Lipovich L."/>
            <person name="Liu J."/>
            <person name="Liuni S."/>
            <person name="McWilliam S."/>
            <person name="Madan Babu M."/>
            <person name="Madera M."/>
            <person name="Marchionni L."/>
            <person name="Matsuda H."/>
            <person name="Matsuzawa S."/>
            <person name="Miki H."/>
            <person name="Mignone F."/>
            <person name="Miyake S."/>
            <person name="Morris K."/>
            <person name="Mottagui-Tabar S."/>
            <person name="Mulder N."/>
            <person name="Nakano N."/>
            <person name="Nakauchi H."/>
            <person name="Ng P."/>
            <person name="Nilsson R."/>
            <person name="Nishiguchi S."/>
            <person name="Nishikawa S."/>
            <person name="Nori F."/>
            <person name="Ohara O."/>
            <person name="Okazaki Y."/>
            <person name="Orlando V."/>
            <person name="Pang K.C."/>
            <person name="Pavan W.J."/>
            <person name="Pavesi G."/>
            <person name="Pesole G."/>
            <person name="Petrovsky N."/>
            <person name="Piazza S."/>
            <person name="Reed J."/>
            <person name="Reid J.F."/>
            <person name="Ring B.Z."/>
            <person name="Ringwald M."/>
            <person name="Rost B."/>
            <person name="Ruan Y."/>
            <person name="Salzberg S.L."/>
            <person name="Sandelin A."/>
            <person name="Schneider C."/>
            <person name="Schoenbach C."/>
            <person name="Sekiguchi K."/>
            <person name="Semple C.A."/>
            <person name="Seno S."/>
            <person name="Sessa L."/>
            <person name="Sheng Y."/>
            <person name="Shibata Y."/>
            <person name="Shimada H."/>
            <person name="Shimada K."/>
            <person name="Silva D."/>
            <person name="Sinclair B."/>
            <person name="Sperling S."/>
            <person name="Stupka E."/>
            <person name="Sugiura K."/>
            <person name="Sultana R."/>
            <person name="Takenaka Y."/>
            <person name="Taki K."/>
            <person name="Tammoja K."/>
            <person name="Tan S.L."/>
            <person name="Tang S."/>
            <person name="Taylor M.S."/>
            <person name="Tegner J."/>
            <person name="Teichmann S.A."/>
            <person name="Ueda H.R."/>
            <person name="van Nimwegen E."/>
            <person name="Verardo R."/>
            <person name="Wei C.L."/>
            <person name="Yagi K."/>
            <person name="Yamanishi H."/>
            <person name="Zabarovsky E."/>
            <person name="Zhu S."/>
            <person name="Zimmer A."/>
            <person name="Hide W."/>
            <person name="Bult C."/>
            <person name="Grimmond S.M."/>
            <person name="Teasdale R.D."/>
            <person name="Liu E.T."/>
            <person name="Brusic V."/>
            <person name="Quackenbush J."/>
            <person name="Wahlestedt C."/>
            <person name="Mattick J.S."/>
            <person name="Hume D.A."/>
            <person name="Kai C."/>
            <person name="Sasaki D."/>
            <person name="Tomaru Y."/>
            <person name="Fukuda S."/>
            <person name="Kanamori-Katayama M."/>
            <person name="Suzuki M."/>
            <person name="Aoki J."/>
            <person name="Arakawa T."/>
            <person name="Iida J."/>
            <person name="Imamura K."/>
            <person name="Itoh M."/>
            <person name="Kato T."/>
            <person name="Kawaji H."/>
            <person name="Kawagashira N."/>
            <person name="Kawashima T."/>
            <person name="Kojima M."/>
            <person name="Kondo S."/>
            <person name="Konno H."/>
            <person name="Nakano K."/>
            <person name="Ninomiya N."/>
            <person name="Nishio T."/>
            <person name="Okada M."/>
            <person name="Plessy C."/>
            <person name="Shibata K."/>
            <person name="Shiraki T."/>
            <person name="Suzuki S."/>
            <person name="Tagami M."/>
            <person name="Waki K."/>
            <person name="Watahiki A."/>
            <person name="Okamura-Oho Y."/>
            <person name="Suzuki H."/>
            <person name="Kawai J."/>
            <person name="Hayashizaki Y."/>
        </authorList>
    </citation>
    <scope>NUCLEOTIDE SEQUENCE [LARGE SCALE MRNA] OF 2646-4010</scope>
    <source>
        <strain>C57BL/6J</strain>
        <tissue>Eye</tissue>
    </source>
</reference>
<reference key="5">
    <citation type="journal article" date="2004" name="Genome Res.">
        <title>The status, quality, and expansion of the NIH full-length cDNA project: the Mammalian Gene Collection (MGC).</title>
        <authorList>
            <consortium name="The MGC Project Team"/>
        </authorList>
    </citation>
    <scope>NUCLEOTIDE SEQUENCE [LARGE SCALE MRNA] OF 3228-4010</scope>
    <source>
        <strain>FVB/N</strain>
        <tissue>Kidney</tissue>
    </source>
</reference>
<reference key="6">
    <citation type="journal article" date="2003" name="Nat. Genet.">
        <title>Fraser syndrome and mouse blebbed phenotype caused by mutations in FRAS1/Fras1 encoding a putative extracellular matrix protein.</title>
        <authorList>
            <person name="McGregor L.K."/>
            <person name="Makela V."/>
            <person name="Darling S.M."/>
            <person name="Vrontou S."/>
            <person name="Chalepakis G."/>
            <person name="Roberts C."/>
            <person name="Smart N."/>
            <person name="Rutland P."/>
            <person name="Prescott N."/>
            <person name="Hopkins J."/>
            <person name="Bentley E."/>
            <person name="Shaw A."/>
            <person name="Roberts E."/>
            <person name="Mueller R."/>
            <person name="Jadeja S."/>
            <person name="Philip N."/>
            <person name="Nelson J."/>
            <person name="Francannet C."/>
            <person name="Perez-Aytes A."/>
            <person name="Megarbane A."/>
            <person name="Kerr B."/>
            <person name="Wainwright B."/>
            <person name="Woolf A.S."/>
            <person name="Winter R.M."/>
            <person name="Scambler P.J."/>
        </authorList>
    </citation>
    <scope>FUNCTION</scope>
    <scope>SUBCELLULAR LOCATION</scope>
    <scope>DEVELOPMENTAL STAGE</scope>
    <scope>DISEASE</scope>
</reference>
<reference key="7">
    <citation type="journal article" date="2010" name="Cell">
        <title>A tissue-specific atlas of mouse protein phosphorylation and expression.</title>
        <authorList>
            <person name="Huttlin E.L."/>
            <person name="Jedrychowski M.P."/>
            <person name="Elias J.E."/>
            <person name="Goswami T."/>
            <person name="Rad R."/>
            <person name="Beausoleil S.A."/>
            <person name="Villen J."/>
            <person name="Haas W."/>
            <person name="Sowa M.E."/>
            <person name="Gygi S.P."/>
        </authorList>
    </citation>
    <scope>IDENTIFICATION BY MASS SPECTROMETRY [LARGE SCALE ANALYSIS]</scope>
    <source>
        <tissue>Kidney</tissue>
    </source>
</reference>
<reference key="8">
    <citation type="journal article" date="2021" name="Eur. J. Neurosci.">
        <title>Behavioural effects of extracellular matrix protein Fras1 depletion in the mouse.</title>
        <authorList>
            <person name="Kalpachidou T."/>
            <person name="Makrygiannis A.K."/>
            <person name="Pavlakis E."/>
            <person name="Stylianopoulou F."/>
            <person name="Chalepakis G."/>
            <person name="Stamatakis A."/>
        </authorList>
    </citation>
    <scope>FUNCTION</scope>
    <scope>DEVELOPMENTAL STAGE</scope>
    <scope>DISRUPTION PHENOTYPE</scope>
    <scope>DISEASE</scope>
</reference>
<sequence length="4010" mass="442369">MGVLKAWLGVALALAEFAVLPNCEGACLYQGSFLADATIWKPDSCQNCRCHGDIVICKPVVCKNPRCAFEKGEVLWIAPNQCCPQCAPRTPGSCHHEGKIHEHGTEWASAPCTVCSCTHGEVRCSHQQCTPLSCGPQELEFLAEGRCCPICVGTGKPCSYDGHVFQDGEDWQLSRCAKCVCRNGLTQCFAAQCQPLFCNQDEIVVRVPGKCCSQCSARSCSTAGQVYEHGEQWKEDACTLCMCDQGQVRCHKQVCPPLRCAKGQGRARHHGQCCEECATPDRSCSSGGVLRYQDEMWKGSACEFCMCDQGQVTCQTGECAKVACALGEELVHLEGKCCPECISRNGYCIYEQKAETMSSSAREIKHVPDGEKWEEGPCKLCECREAQVTCYEPSCPPCPVATLALVVKGQCCPDCTPVHCHPDCLTCSHSPDHCDLCQDPTKLLQNGRCVHSCGLGFYQAGSLCLACQPQCSTCTNGLECSSCLPPLLMQQGQCVSTCGDGFYQDHHSCAVCHESCAGCWGPTEKHCMACRDPLQVLRDSSCENTCGNGFYNRQGTCVACDQSCKSCGPSSPRCLSCAEKTILHDGKCISECPHGYYADSTGSCKVCHSSCASCSGPTAAHCIACIHPQTLRQGHCLPSCGEGFYPDHGICEACHASCHTCVGPQPSHCTQCKKPEAGLLVEQHSGENVPYGKCVSRCGTHFYLESTGLCEVCHPSCLTCEGKSPHNCTGCESTHALLAGCCVSQCPETHFNLEGTCTECHPSCRQCHGPLESDCVSCHPHLTLTSGHCKTSCKEEQFLNLVGYCADCHPLCQHCVANLQDTGSICLKCQHARHLLLGDHCVPECPPGHYKERGTCKTCHSSCRSCQNGGPFSCSSCDTGLVLTHIGTCSTACFPGHYLDDNQVCQPCNRHCRSCDSQGSCTSCRDPSKVLLFGECQYESCTPQYYLDIATKTCKECDWSCNACTGPLRTDCLQCMDGYVLQDGVCVEQCSPQHYRDSGSCKRCDSHCVECQGPHECTRCEEPFLLFQAQCVQECGKGYFADHAKHRCIACPQGCLRCSHKDRCHLCDHSFFLKSGLCMPTCVPGFSGHSSNENCTDKMYTPSLHVNGSLTLGIGSMKPLDFSLLNIQHQDGRVEDLLFHVVSTPTNGQLLLSRNGKEVQLEKAGHFSWKDVNEKKVRFVHSKEKLRKGYFSLKISDQQFFSEPQLINIQAFSTQAPYVLRNEVLHVSKGERATITTQLLDIRDDDNPQDVVVNVLDPPLHGQLLQMPPAPAASIYQFHLDELSRGLLLYAHDGSDSTSDIIVFQANDGHSFQNILFHVKNIPKNDRALRLVTNSMVWVPEGGMLKITNRILKAQAPGVRADDIIYKITHSRPQFGEVVLLMNLPADSPAGPAEEGHHLPDGRMATPISTFTQQDIDDGVVWYRHLGAPTQSDSFRFQVSSATSAQEHLESHMFNIAILPQAPEAPKLSLGTSLHMTAREDGLSVIQPQSLSFVKAESPSGKIIYNITVPLHPNQGIIEHRDRPHSPIQYFTQEDINQGQIMYRPPVAPPHLQEIMAFSFAGLPESVKFYFTVSDGQHTSPEMALTIHLLHSDLQPPAFQVKAPLLEVSPGGRTSLGLQLLVRDAQVVPEELFFQLQKSPQHGMLVKYTAKSSVTMAAGDTFTYDEVERNVLQYVHDGSSAWEDSLEISVTDGLTVTTSEVKVEVSPSENRGPRLAPGSSLSMTVASQHTAIITRSHLAYVDDSSSDPEIWIRLSSLPLYGVLFRSSGPDMDELSGDSNFTMEDINKKNIRYSAVFETDGHSVTDGFHFSVSDMDGNHVDNQVFTITVTPAENPPHIIAFADLITVDEGGRAPLSLHHFFATEDQDNLQDDAVIKLSALPKYGCIENTGTGDRFGPGANSELEASFPIQDVLENYIYYFQSVHESIEPTHDVFSFYVSDGSGRSEIHSINITIERKNDEPPRMTLRPLGVRLSSGVAISNSSLSLQDLDTPDNELIFVLMKKPDHGHLLRRSTASDPLENGTVLDQGSSFTYQDVLAGLVGYLPGDIYMAVDEFRFSLTDGLHVDTGRMEIYIELPSTNIPHLAINRGLQLSAGSVARITEQHLKATDTDSEAGQVVYIMKEDPGAGRLLMAKADNLEQISVRGPIRSFTQADVSQGQIEYSHGPGEPGGSFAFKFDVVDGEGNKLADQSFSIGVLEDKSPPVVITNRGLVLDENSVEKITTAQLSATDQDSKPTELIYRITTQPQLGHLEHVASPGIQISSFTQADLASRNVQYVRSSGTGKQSDAFSFVLSDGLHEVTQTFPITIHPVDDARPLVQNRGMRVQEGVRKTITEFELKAVDVDTEAESITFTIVQPPRHGTIERTARGQRFHQTSSFTMEDIYQNRVSYSHDGSNSLKDRFTFTVSDGTNPFFIIEEGGEEIMTAAPQQFHVDILPVDDGTPRIVTNLGLQWLEYMDGKATNLITKKELLTVDPDTEDSQLIYEVTTGPMHGYLENKLQPGRAAATFTQEHVNLGLIRYVLYEEKIQKVMDSFQFLVKDSKPNVVSDNVFHIQWSLISFKYTSYNVSEKAGSVSVTVQRTGNLNQYAIVLCRTEQGTASSSSHPGQQDYMEYAGQVQFDEGEGTKSCTVIINDDDVFENIESFTVGLSMPAYALLGEFTQAKVVINDTEDEPTLEFDKKTYRVNESAGFLFAPIKRQGDSSSTVSAVCYTVPKSAMGSSLYALESGSDFKSRGRSAESRVIFGPGVTVSTCDVMVIDDSEYEEEEEFEIALADASNNARIGRQAVAKVLISGPNDASTVSLGNTAFTISEDAGTVKIPVIRHGTDLSTFTSVWCATRPSDPASATPGVDYVPSSRKVEFGPGITEQYCTLTILDDTQYPVIEGLETFVVFLSSAQGAELTKPSQAVIAINDTFQDVPSMQFSKDLLLVKEKEGVLHIPIIRSGDLSYESSVRCYTQGHSAQVMEDFEERRNADSSRITFLKGQKTKNCTVYIHDDSMFEPEEQFRVYLGHPLGNHWSGARIGKNSVATVTISNDEDAPTIEFEEAAYQVREPAGPEAIAVLSIKVIRRGDQNRTSKIRCSTRDGSAQSGVDYYPKSRVLKFSPGVDHIFFKVEILSNEDREWHESFSLVLGPDDLVEAVLGDVTTATVTILDQEAAGSLILPAPPIVVTLADYDHVEELAKEGVKKAPSPGYPLVCVTPCDPRYPRYAVMKERCSEAGINQTSVQFSWEVAAPTDGNGARSPFETITDNTPFTSVNHKVLDSIYFSRRFHVRCVAKAVDKVGHVGTPLRSNVVTIGTDSAICHTPVVAGTARGFQAQSFIATLKYLDVKHKEHPNRIHISVQIPHQDGMLPLISTMPLHNLHFLLSESIYRHQHVCSNLVTAQDLRGLAEAGFLNDAGFHSTALGPGYDRPFQFDSSVREPKTIQLYRHLNLKSCVWTFDAYYDMTELIDVCGGSVTADFQVRDSAQSFLTVHVPLYVSYIYVTAPRGWASLEHHTEMEFSFFYDTVLWRTGIQTDSVLSARLQIIRIYIREDGRLVIEFKTHAKFRGQFVIEHHTLPDVKSFILTPDHLGGIQFDLQLLWSAQTFDSPHQLWRATSSYNRKDYSGEYTIYLIPCTVQPTQPWVDPGEKALACTAHAPERFLIPIAFQQTNRPVPVVYSLNTEFQLCNNEKVFLMDPNTSDMSLAEMDYKGAFSKGQILYGRVLWNPEQNLHSAYKLQLEKVYLCTGKDGYVPFFDPTGTIYNEGPQYGCIQPNKHLKHRFLLLDRSQPEVTDKYFHDVPFEAHFASELPDFQVVSSMPGVDGFTLKVDALYKVEAGHQWYLQVIYIIGPDSTSRPRVQRSLTVSLRRHQRDLVDPSGWLSLDDSLIYDNEGDQVKNGTNMKSLNLEMQEPVIAASLSQTGASIGSALAAIMLLLLLFLVACFVTRKCQKQKKKQPPEDTLEEYPLNTKVDVAKRNADKVEKNANRQYCTVRNVNILSDNEGYYTFKGAKVKKLNLEVRVHNNLQDGTEV</sequence>
<organism>
    <name type="scientific">Mus musculus</name>
    <name type="common">Mouse</name>
    <dbReference type="NCBI Taxonomy" id="10090"/>
    <lineage>
        <taxon>Eukaryota</taxon>
        <taxon>Metazoa</taxon>
        <taxon>Chordata</taxon>
        <taxon>Craniata</taxon>
        <taxon>Vertebrata</taxon>
        <taxon>Euteleostomi</taxon>
        <taxon>Mammalia</taxon>
        <taxon>Eutheria</taxon>
        <taxon>Euarchontoglires</taxon>
        <taxon>Glires</taxon>
        <taxon>Rodentia</taxon>
        <taxon>Myomorpha</taxon>
        <taxon>Muroidea</taxon>
        <taxon>Muridae</taxon>
        <taxon>Murinae</taxon>
        <taxon>Mus</taxon>
        <taxon>Mus</taxon>
    </lineage>
</organism>
<comment type="function">
    <text evidence="6 8">Involved in extracellular matrix organization (PubMed:32333816). Required for the regulation of epidermal-basement membrane adhesion responsible for proper organogenesis during embryonic development (PubMed:12766769). Involved in brain organization and function (PubMed:32333816).</text>
</comment>
<comment type="interaction">
    <interactant intactId="EBI-15594303">
        <id>Q80T14</id>
    </interactant>
    <interactant intactId="EBI-15594269">
        <id>Q6NVD0</id>
        <label>Frem2</label>
    </interactant>
    <organismsDiffer>false</organismsDiffer>
    <experiments>2</experiments>
</comment>
<comment type="subcellular location">
    <subcellularLocation>
        <location evidence="6 8">Cell membrane</location>
        <topology evidence="10">Single-pass type I membrane protein</topology>
        <orientation evidence="6 8">Extracellular side</orientation>
    </subcellularLocation>
</comment>
<comment type="developmental stage">
    <text evidence="6 7 8">Highly expressed in the apical ectodermal ridge of the limb buds from 10.5-12.5 dpc and expression was also detected in the interdigital spaces at 14.5 dpc. Found in cells just underlying the surface epithelium of the entire embryo and in the linings of the peritoneal cavity and dorsal aorta. At 12 dpc, detected in the mesonephric duct and in the lens (PubMed:12766769). Found in a linear fashion underlying the epidermis and the basal surface of other epithelia in embryos (PubMed:12766770). Found in meningeal and choroidal epidermal-basement membranes in embryos and neonates (PubMed:32333816).</text>
</comment>
<comment type="domain">
    <text evidence="1">The Calx-beta domains bind calcium with high affinity and undergo a major conformational shift upon binding.</text>
</comment>
<comment type="disease">
    <text evidence="6 7 8">Defects in Fras1 are the cause of blebbed (bl) phenotype, which is characterized by blister formation, syndactyly, eyelid fusion and renal agenesis. Subepidermal blisters are predominantly formed in the head region around the eyes and at the distal part of the limbs. As development proceeds blisters that are initially transparent gradually become hemorrhagic and embryos die between 14.5 dpc and 16.5 dpc.</text>
</comment>
<comment type="disruption phenotype">
    <text evidence="8">Homozygous adult knockout mice display impaired performance in various types of learning and memory tasks as well as reduced anxiety.</text>
</comment>
<comment type="similarity">
    <text evidence="10">Belongs to the FRAS1 family.</text>
</comment>
<comment type="sequence caution" evidence="10">
    <conflict type="erroneous termination">
        <sequence resource="EMBL-CDS" id="BAC34788"/>
    </conflict>
    <text>Truncated C-terminus.</text>
</comment>
<comment type="sequence caution" evidence="10">
    <conflict type="frameshift">
        <sequence resource="EMBL-CDS" id="BAC34788"/>
    </conflict>
</comment>
<gene>
    <name evidence="11" type="primary">Fras1</name>
    <name type="synonym">Kiaa1500</name>
</gene>
<accession>Q80T14</accession>
<accession>E9QPG9</accession>
<accession>Q80TC7</accession>
<accession>Q811H8</accession>
<accession>Q8BPZ4</accession>
<name>FRAS1_MOUSE</name>
<evidence type="ECO:0000250" key="1"/>
<evidence type="ECO:0000250" key="2">
    <source>
        <dbReference type="UniProtKB" id="Q86XX4"/>
    </source>
</evidence>
<evidence type="ECO:0000255" key="3"/>
<evidence type="ECO:0000255" key="4">
    <source>
        <dbReference type="PROSITE-ProRule" id="PRU00220"/>
    </source>
</evidence>
<evidence type="ECO:0000255" key="5">
    <source>
        <dbReference type="PROSITE-ProRule" id="PRU01201"/>
    </source>
</evidence>
<evidence type="ECO:0000269" key="6">
    <source>
    </source>
</evidence>
<evidence type="ECO:0000269" key="7">
    <source>
    </source>
</evidence>
<evidence type="ECO:0000269" key="8">
    <source>
    </source>
</evidence>
<evidence type="ECO:0000303" key="9">
    <source>
    </source>
</evidence>
<evidence type="ECO:0000305" key="10"/>
<evidence type="ECO:0000312" key="11">
    <source>
        <dbReference type="MGI" id="MGI:2385368"/>
    </source>
</evidence>
<keyword id="KW-0106">Calcium</keyword>
<keyword id="KW-1003">Cell membrane</keyword>
<keyword id="KW-0325">Glycoprotein</keyword>
<keyword id="KW-0472">Membrane</keyword>
<keyword id="KW-0479">Metal-binding</keyword>
<keyword id="KW-0597">Phosphoprotein</keyword>
<keyword id="KW-1185">Reference proteome</keyword>
<keyword id="KW-0677">Repeat</keyword>
<keyword id="KW-0732">Signal</keyword>
<keyword id="KW-0812">Transmembrane</keyword>
<keyword id="KW-1133">Transmembrane helix</keyword>
<proteinExistence type="evidence at protein level"/>
<feature type="signal peptide" evidence="3">
    <location>
        <begin position="1"/>
        <end position="25"/>
    </location>
</feature>
<feature type="chain" id="PRO_0000010121" description="Extracellular matrix organizing protein FRAS1">
    <location>
        <begin position="26"/>
        <end position="4010"/>
    </location>
</feature>
<feature type="topological domain" description="Extracellular" evidence="3">
    <location>
        <begin position="26"/>
        <end position="3903"/>
    </location>
</feature>
<feature type="transmembrane region" description="Helical" evidence="3">
    <location>
        <begin position="3904"/>
        <end position="3924"/>
    </location>
</feature>
<feature type="topological domain" description="Cytoplasmic" evidence="3">
    <location>
        <begin position="3925"/>
        <end position="4010"/>
    </location>
</feature>
<feature type="domain" description="VWFC 1" evidence="4">
    <location>
        <begin position="26"/>
        <end position="87"/>
    </location>
</feature>
<feature type="domain" description="VWFC 2" evidence="4">
    <location>
        <begin position="92"/>
        <end position="152"/>
    </location>
</feature>
<feature type="domain" description="VWFC 3" evidence="4">
    <location>
        <begin position="156"/>
        <end position="216"/>
    </location>
</feature>
<feature type="domain" description="VWFC 4" evidence="4">
    <location>
        <begin position="218"/>
        <end position="278"/>
    </location>
</feature>
<feature type="domain" description="VWFC 5" evidence="4">
    <location>
        <begin position="282"/>
        <end position="342"/>
    </location>
</feature>
<feature type="domain" description="VWFC 6" evidence="4">
    <location>
        <begin position="358"/>
        <end position="416"/>
    </location>
</feature>
<feature type="repeat" description="FU 1">
    <location>
        <begin position="408"/>
        <end position="459"/>
    </location>
</feature>
<feature type="repeat" description="FU 2">
    <location>
        <begin position="461"/>
        <end position="504"/>
    </location>
</feature>
<feature type="repeat" description="FU 3">
    <location>
        <begin position="506"/>
        <end position="552"/>
    </location>
</feature>
<feature type="repeat" description="FU 4">
    <location>
        <begin position="554"/>
        <end position="598"/>
    </location>
</feature>
<feature type="repeat" description="FU 5">
    <location>
        <begin position="601"/>
        <end position="646"/>
    </location>
</feature>
<feature type="repeat" description="FU 6">
    <location>
        <begin position="648"/>
        <end position="704"/>
    </location>
</feature>
<feature type="repeat" description="FU 7">
    <location>
        <begin position="707"/>
        <end position="752"/>
    </location>
</feature>
<feature type="repeat" description="FU 8">
    <location>
        <begin position="754"/>
        <end position="799"/>
    </location>
</feature>
<feature type="repeat" description="FU 9">
    <location>
        <begin position="802"/>
        <end position="851"/>
    </location>
</feature>
<feature type="repeat" description="FU 10">
    <location>
        <begin position="853"/>
        <end position="899"/>
    </location>
</feature>
<feature type="repeat" description="FU 11">
    <location>
        <begin position="902"/>
        <end position="947"/>
    </location>
</feature>
<feature type="repeat" description="FU 12">
    <location>
        <begin position="951"/>
        <end position="996"/>
    </location>
</feature>
<feature type="repeat" description="FU 13">
    <location>
        <begin position="998"/>
        <end position="1041"/>
    </location>
</feature>
<feature type="repeat" description="FU 14">
    <location>
        <begin position="1045"/>
        <end position="1088"/>
    </location>
</feature>
<feature type="repeat" description="CSPG 1" evidence="5">
    <location>
        <begin position="1101"/>
        <end position="1196"/>
    </location>
</feature>
<feature type="repeat" description="CSPG 2" evidence="5">
    <location>
        <begin position="1216"/>
        <end position="1307"/>
    </location>
</feature>
<feature type="repeat" description="CSPG 3" evidence="5">
    <location>
        <begin position="1328"/>
        <end position="1440"/>
    </location>
</feature>
<feature type="repeat" description="CSPG 4" evidence="5">
    <location>
        <begin position="1465"/>
        <end position="1561"/>
    </location>
</feature>
<feature type="repeat" description="CSPG 5" evidence="5">
    <location>
        <begin position="1597"/>
        <end position="1691"/>
    </location>
</feature>
<feature type="repeat" description="CSPG 6" evidence="5">
    <location>
        <begin position="1712"/>
        <end position="1812"/>
    </location>
</feature>
<feature type="repeat" description="CSPG 7" evidence="5">
    <location>
        <begin position="1834"/>
        <end position="1938"/>
    </location>
</feature>
<feature type="repeat" description="CSPG 8" evidence="5">
    <location>
        <begin position="1959"/>
        <end position="2059"/>
    </location>
</feature>
<feature type="repeat" description="CSPG 9" evidence="5">
    <location>
        <begin position="2080"/>
        <end position="2179"/>
    </location>
</feature>
<feature type="repeat" description="CSPG 10" evidence="5">
    <location>
        <begin position="2201"/>
        <end position="2293"/>
    </location>
</feature>
<feature type="repeat" description="CSPG 11" evidence="5">
    <location>
        <begin position="2313"/>
        <end position="2406"/>
    </location>
</feature>
<feature type="repeat" description="CSPG 12" evidence="5">
    <location>
        <begin position="2441"/>
        <end position="2538"/>
    </location>
</feature>
<feature type="domain" description="Calx-beta 1">
    <location>
        <begin position="2545"/>
        <end position="2648"/>
    </location>
</feature>
<feature type="domain" description="Calx-beta 2">
    <location>
        <begin position="2661"/>
        <end position="2772"/>
    </location>
</feature>
<feature type="domain" description="Calx-beta 3">
    <location>
        <begin position="2786"/>
        <end position="2892"/>
    </location>
</feature>
<feature type="domain" description="Calx-beta 4">
    <location>
        <begin position="2907"/>
        <end position="3009"/>
    </location>
</feature>
<feature type="domain" description="Calx-beta 5">
    <location>
        <begin position="3027"/>
        <end position="3131"/>
    </location>
</feature>
<feature type="modified residue" description="Phosphoserine" evidence="2">
    <location>
        <position position="343"/>
    </location>
</feature>
<feature type="glycosylation site" description="N-linked (GlcNAc...) asparagine" evidence="3">
    <location>
        <position position="727"/>
    </location>
</feature>
<feature type="glycosylation site" description="N-linked (GlcNAc...) asparagine" evidence="3">
    <location>
        <position position="1094"/>
    </location>
</feature>
<feature type="glycosylation site" description="N-linked (GlcNAc...) asparagine" evidence="3">
    <location>
        <position position="1107"/>
    </location>
</feature>
<feature type="glycosylation site" description="N-linked (GlcNAc...) asparagine" evidence="3">
    <location>
        <position position="1506"/>
    </location>
</feature>
<feature type="glycosylation site" description="N-linked (GlcNAc...) asparagine" evidence="3">
    <location>
        <position position="1779"/>
    </location>
</feature>
<feature type="glycosylation site" description="N-linked (GlcNAc...) asparagine" evidence="3">
    <location>
        <position position="1950"/>
    </location>
</feature>
<feature type="glycosylation site" description="N-linked (GlcNAc...) asparagine" evidence="3">
    <location>
        <position position="1980"/>
    </location>
</feature>
<feature type="glycosylation site" description="N-linked (GlcNAc...) asparagine" evidence="3">
    <location>
        <position position="2565"/>
    </location>
</feature>
<feature type="glycosylation site" description="N-linked (GlcNAc...) asparagine" evidence="3">
    <location>
        <position position="2666"/>
    </location>
</feature>
<feature type="glycosylation site" description="N-linked (GlcNAc...) asparagine" evidence="3">
    <location>
        <position position="2684"/>
    </location>
</feature>
<feature type="glycosylation site" description="N-linked (GlcNAc...) asparagine" evidence="3">
    <location>
        <position position="2910"/>
    </location>
</feature>
<feature type="glycosylation site" description="N-linked (GlcNAc...) asparagine" evidence="3">
    <location>
        <position position="2987"/>
    </location>
</feature>
<feature type="glycosylation site" description="N-linked (GlcNAc...) asparagine" evidence="3">
    <location>
        <position position="3072"/>
    </location>
</feature>
<feature type="glycosylation site" description="N-linked (GlcNAc...) asparagine" evidence="3">
    <location>
        <position position="3220"/>
    </location>
</feature>
<feature type="glycosylation site" description="N-linked (GlcNAc...) asparagine" evidence="3">
    <location>
        <position position="3678"/>
    </location>
</feature>
<feature type="glycosylation site" description="N-linked (GlcNAc...) asparagine" evidence="3">
    <location>
        <position position="3877"/>
    </location>
</feature>
<feature type="sequence conflict" description="In Ref. 1; CAD33519." evidence="10" ref="1">
    <original>N</original>
    <variation>H</variation>
    <location>
        <position position="22"/>
    </location>
</feature>
<feature type="sequence conflict" description="In Ref. 1; CAD33519." evidence="10" ref="1">
    <original>L</original>
    <variation>F</variation>
    <location>
        <position position="1026"/>
    </location>
</feature>
<feature type="sequence conflict" description="In Ref. 1; CAD33519." evidence="10" ref="1">
    <original>R</original>
    <variation>Q</variation>
    <location>
        <position position="1063"/>
    </location>
</feature>
<feature type="sequence conflict" description="In Ref. 1; CAD33519." evidence="10" ref="1">
    <original>P</original>
    <variation>H</variation>
    <location>
        <position position="1466"/>
    </location>
</feature>
<feature type="sequence conflict" description="In Ref. 1; CAD33519." evidence="10" ref="1">
    <original>N</original>
    <variation>H</variation>
    <location>
        <position position="2020"/>
    </location>
</feature>
<feature type="sequence conflict" description="In Ref. 1; CAD33519." evidence="10" ref="1">
    <original>R</original>
    <variation>K</variation>
    <location>
        <position position="2208"/>
    </location>
</feature>
<feature type="sequence conflict" description="In Ref. 1; CAD33519 and 3; BAC65800." evidence="10" ref="1 3">
    <original>V</original>
    <variation>L</variation>
    <location>
        <position position="2310"/>
    </location>
</feature>
<feature type="sequence conflict" description="In Ref. 1; CAD33519 and 3; BAC65800." evidence="10" ref="1 3">
    <original>R</original>
    <variation>Q</variation>
    <location>
        <position position="2314"/>
    </location>
</feature>
<feature type="sequence conflict" description="In Ref. 1; CAD33519 and 3; BAC65800." evidence="10" ref="1 3">
    <original>G</original>
    <variation>S</variation>
    <location>
        <position position="2623"/>
    </location>
</feature>
<feature type="sequence conflict" description="In Ref. 4; BAC34788." evidence="10" ref="4">
    <original>G</original>
    <variation>W</variation>
    <location>
        <position position="2646"/>
    </location>
</feature>
<feature type="sequence conflict" description="In Ref. 1; CAD33519 and 3; BAC65800." evidence="10" ref="1 3">
    <original>V</original>
    <variation>I</variation>
    <location>
        <position position="2664"/>
    </location>
</feature>
<feature type="sequence conflict" description="In Ref. 1; CAD33519 and 3; BAC65800." evidence="10" ref="1 3">
    <original>L</original>
    <variation>P</variation>
    <location>
        <position position="3135"/>
    </location>
</feature>
<feature type="sequence conflict" description="In Ref. 4; BAC34788." evidence="10" ref="4">
    <original>D</original>
    <variation>G</variation>
    <location>
        <position position="3172"/>
    </location>
</feature>
<feature type="sequence conflict" description="In Ref. 1; CAD33519, 3; BAC65800 and 5; AAH44881." evidence="10" ref="1 3 5">
    <original>Q</original>
    <variation>R</variation>
    <location>
        <position position="3383"/>
    </location>
</feature>
<feature type="sequence conflict" description="In Ref. 1; CAD33519, 3; BAC65800 and 5; AAH44881." evidence="10" ref="1 3 5">
    <original>N</original>
    <variation>D</variation>
    <location>
        <position position="3395"/>
    </location>
</feature>
<dbReference type="EMBL" id="AJ489280">
    <property type="protein sequence ID" value="CAD33519.1"/>
    <property type="molecule type" value="mRNA"/>
</dbReference>
<dbReference type="EMBL" id="AC101391">
    <property type="status" value="NOT_ANNOTATED_CDS"/>
    <property type="molecule type" value="Genomic_DNA"/>
</dbReference>
<dbReference type="EMBL" id="AC121829">
    <property type="status" value="NOT_ANNOTATED_CDS"/>
    <property type="molecule type" value="Genomic_DNA"/>
</dbReference>
<dbReference type="EMBL" id="AC122007">
    <property type="status" value="NOT_ANNOTATED_CDS"/>
    <property type="molecule type" value="Genomic_DNA"/>
</dbReference>
<dbReference type="EMBL" id="AC151985">
    <property type="status" value="NOT_ANNOTATED_CDS"/>
    <property type="molecule type" value="Genomic_DNA"/>
</dbReference>
<dbReference type="EMBL" id="AK122518">
    <property type="protein sequence ID" value="BAC65800.1"/>
    <property type="molecule type" value="mRNA"/>
</dbReference>
<dbReference type="EMBL" id="AK051850">
    <property type="protein sequence ID" value="BAC34788.1"/>
    <property type="status" value="ALT_SEQ"/>
    <property type="molecule type" value="mRNA"/>
</dbReference>
<dbReference type="EMBL" id="BC044881">
    <property type="protein sequence ID" value="AAH44881.1"/>
    <property type="molecule type" value="mRNA"/>
</dbReference>
<dbReference type="CCDS" id="CCDS19450.1"/>
<dbReference type="RefSeq" id="NP_780682.3">
    <property type="nucleotide sequence ID" value="NM_175473.3"/>
</dbReference>
<dbReference type="SMR" id="Q80T14"/>
<dbReference type="BioGRID" id="231125">
    <property type="interactions" value="1"/>
</dbReference>
<dbReference type="CORUM" id="Q80T14"/>
<dbReference type="DIP" id="DIP-61242N"/>
<dbReference type="FunCoup" id="Q80T14">
    <property type="interactions" value="178"/>
</dbReference>
<dbReference type="IntAct" id="Q80T14">
    <property type="interactions" value="2"/>
</dbReference>
<dbReference type="STRING" id="10090.ENSMUSP00000043250"/>
<dbReference type="GlyConnect" id="2307">
    <property type="glycosylation" value="1 N-Linked glycan (1 site)"/>
</dbReference>
<dbReference type="GlyCosmos" id="Q80T14">
    <property type="glycosylation" value="16 sites, 1 glycan"/>
</dbReference>
<dbReference type="GlyGen" id="Q80T14">
    <property type="glycosylation" value="21 sites, 4 N-linked glycans (6 sites)"/>
</dbReference>
<dbReference type="iPTMnet" id="Q80T14"/>
<dbReference type="PhosphoSitePlus" id="Q80T14"/>
<dbReference type="SwissPalm" id="Q80T14"/>
<dbReference type="PaxDb" id="10090-ENSMUSP00000043250"/>
<dbReference type="PeptideAtlas" id="Q80T14"/>
<dbReference type="ProteomicsDB" id="267408"/>
<dbReference type="Antibodypedia" id="2470">
    <property type="antibodies" value="32 antibodies from 9 providers"/>
</dbReference>
<dbReference type="DNASU" id="231470"/>
<dbReference type="Ensembl" id="ENSMUST00000036019.5">
    <property type="protein sequence ID" value="ENSMUSP00000043250.5"/>
    <property type="gene ID" value="ENSMUSG00000034687.9"/>
</dbReference>
<dbReference type="GeneID" id="231470"/>
<dbReference type="KEGG" id="mmu:231470"/>
<dbReference type="UCSC" id="uc008yfk.1">
    <property type="organism name" value="mouse"/>
</dbReference>
<dbReference type="AGR" id="MGI:2385368"/>
<dbReference type="CTD" id="80144"/>
<dbReference type="MGI" id="MGI:2385368">
    <property type="gene designation" value="Fras1"/>
</dbReference>
<dbReference type="VEuPathDB" id="HostDB:ENSMUSG00000034687"/>
<dbReference type="eggNOG" id="KOG1025">
    <property type="taxonomic scope" value="Eukaryota"/>
</dbReference>
<dbReference type="eggNOG" id="KOG1216">
    <property type="taxonomic scope" value="Eukaryota"/>
</dbReference>
<dbReference type="eggNOG" id="KOG1306">
    <property type="taxonomic scope" value="Eukaryota"/>
</dbReference>
<dbReference type="eggNOG" id="KOG3525">
    <property type="taxonomic scope" value="Eukaryota"/>
</dbReference>
<dbReference type="eggNOG" id="KOG3597">
    <property type="taxonomic scope" value="Eukaryota"/>
</dbReference>
<dbReference type="GeneTree" id="ENSGT00940000162130"/>
<dbReference type="HOGENOM" id="CLU_000244_0_0_1"/>
<dbReference type="InParanoid" id="Q80T14"/>
<dbReference type="OMA" id="NSGMRVQ"/>
<dbReference type="OrthoDB" id="27914at9989"/>
<dbReference type="PhylomeDB" id="Q80T14"/>
<dbReference type="TreeFam" id="TF316876"/>
<dbReference type="BioGRID-ORCS" id="231470">
    <property type="hits" value="3 hits in 77 CRISPR screens"/>
</dbReference>
<dbReference type="ChiTaRS" id="Fras1">
    <property type="organism name" value="mouse"/>
</dbReference>
<dbReference type="PRO" id="PR:Q80T14"/>
<dbReference type="Proteomes" id="UP000000589">
    <property type="component" value="Chromosome 5"/>
</dbReference>
<dbReference type="RNAct" id="Q80T14">
    <property type="molecule type" value="protein"/>
</dbReference>
<dbReference type="Bgee" id="ENSMUSG00000034687">
    <property type="expression patterns" value="Expressed in fourth ventricle and 212 other cell types or tissues"/>
</dbReference>
<dbReference type="GO" id="GO:0005604">
    <property type="term" value="C:basement membrane"/>
    <property type="evidence" value="ECO:0000314"/>
    <property type="project" value="BHF-UCL"/>
</dbReference>
<dbReference type="GO" id="GO:0062023">
    <property type="term" value="C:collagen-containing extracellular matrix"/>
    <property type="evidence" value="ECO:0007005"/>
    <property type="project" value="BHF-UCL"/>
</dbReference>
<dbReference type="GO" id="GO:0005886">
    <property type="term" value="C:plasma membrane"/>
    <property type="evidence" value="ECO:0007669"/>
    <property type="project" value="UniProtKB-SubCell"/>
</dbReference>
<dbReference type="GO" id="GO:0046872">
    <property type="term" value="F:metal ion binding"/>
    <property type="evidence" value="ECO:0007669"/>
    <property type="project" value="UniProtKB-KW"/>
</dbReference>
<dbReference type="GO" id="GO:0007154">
    <property type="term" value="P:cell communication"/>
    <property type="evidence" value="ECO:0007669"/>
    <property type="project" value="InterPro"/>
</dbReference>
<dbReference type="GO" id="GO:0030326">
    <property type="term" value="P:embryonic limb morphogenesis"/>
    <property type="evidence" value="ECO:0000315"/>
    <property type="project" value="MGI"/>
</dbReference>
<dbReference type="GO" id="GO:0003338">
    <property type="term" value="P:metanephros morphogenesis"/>
    <property type="evidence" value="ECO:0000315"/>
    <property type="project" value="MGI"/>
</dbReference>
<dbReference type="GO" id="GO:0002009">
    <property type="term" value="P:morphogenesis of an epithelium"/>
    <property type="evidence" value="ECO:0000315"/>
    <property type="project" value="MGI"/>
</dbReference>
<dbReference type="GO" id="GO:0015031">
    <property type="term" value="P:protein transport"/>
    <property type="evidence" value="ECO:0000315"/>
    <property type="project" value="MGI"/>
</dbReference>
<dbReference type="GO" id="GO:0060021">
    <property type="term" value="P:roof of mouth development"/>
    <property type="evidence" value="ECO:0000315"/>
    <property type="project" value="MGI"/>
</dbReference>
<dbReference type="GO" id="GO:0043588">
    <property type="term" value="P:skin development"/>
    <property type="evidence" value="ECO:0000315"/>
    <property type="project" value="MGI"/>
</dbReference>
<dbReference type="CDD" id="cd00064">
    <property type="entry name" value="FU"/>
    <property type="match status" value="12"/>
</dbReference>
<dbReference type="FunFam" id="2.10.220.10:FF:000062">
    <property type="entry name" value="Extracellular matrix protein FRAS1"/>
    <property type="match status" value="1"/>
</dbReference>
<dbReference type="FunFam" id="2.60.40.2030:FF:000005">
    <property type="entry name" value="Extracellular matrix protein FRAS1 isoform 1"/>
    <property type="match status" value="1"/>
</dbReference>
<dbReference type="FunFam" id="2.10.220.10:FF:000026">
    <property type="entry name" value="Fraser extracellular matrix complex subunit 1"/>
    <property type="match status" value="1"/>
</dbReference>
<dbReference type="FunFam" id="2.10.220.10:FF:000038">
    <property type="entry name" value="Fraser extracellular matrix complex subunit 1"/>
    <property type="match status" value="1"/>
</dbReference>
<dbReference type="FunFam" id="2.60.40.2030:FF:000003">
    <property type="entry name" value="Fraser extracellular matrix complex subunit 1"/>
    <property type="match status" value="1"/>
</dbReference>
<dbReference type="FunFam" id="2.60.40.2030:FF:000006">
    <property type="entry name" value="Fraser extracellular matrix complex subunit 1"/>
    <property type="match status" value="1"/>
</dbReference>
<dbReference type="FunFam" id="2.60.40.2030:FF:000010">
    <property type="entry name" value="Fraser extracellular matrix complex subunit 1"/>
    <property type="match status" value="1"/>
</dbReference>
<dbReference type="FunFam" id="2.60.40.2030:FF:000035">
    <property type="entry name" value="Fraser extracellular matrix complex subunit 1"/>
    <property type="match status" value="1"/>
</dbReference>
<dbReference type="Gene3D" id="2.60.40.2030">
    <property type="match status" value="5"/>
</dbReference>
<dbReference type="Gene3D" id="6.20.200.20">
    <property type="match status" value="5"/>
</dbReference>
<dbReference type="Gene3D" id="2.10.70.10">
    <property type="entry name" value="Complement Module, domain 1"/>
    <property type="match status" value="1"/>
</dbReference>
<dbReference type="Gene3D" id="2.10.220.10">
    <property type="entry name" value="Hormone Receptor, Insulin-like Growth Factor Receptor 1, Chain A, domain 2"/>
    <property type="match status" value="8"/>
</dbReference>
<dbReference type="InterPro" id="IPR038081">
    <property type="entry name" value="CalX-like_sf"/>
</dbReference>
<dbReference type="InterPro" id="IPR003644">
    <property type="entry name" value="Calx_beta"/>
</dbReference>
<dbReference type="InterPro" id="IPR039005">
    <property type="entry name" value="CSPG_rpt"/>
</dbReference>
<dbReference type="InterPro" id="IPR000742">
    <property type="entry name" value="EGF-like_dom"/>
</dbReference>
<dbReference type="InterPro" id="IPR051561">
    <property type="entry name" value="FRAS1_ECM"/>
</dbReference>
<dbReference type="InterPro" id="IPR006212">
    <property type="entry name" value="Furin_repeat"/>
</dbReference>
<dbReference type="InterPro" id="IPR009030">
    <property type="entry name" value="Growth_fac_rcpt_cys_sf"/>
</dbReference>
<dbReference type="InterPro" id="IPR001007">
    <property type="entry name" value="VWF_dom"/>
</dbReference>
<dbReference type="PANTHER" id="PTHR45739:SF1">
    <property type="entry name" value="EXTRACELLULAR MATRIX ORGANIZING PROTEIN FRAS1"/>
    <property type="match status" value="1"/>
</dbReference>
<dbReference type="PANTHER" id="PTHR45739">
    <property type="entry name" value="MATRIX PROTEIN, PUTATIVE-RELATED"/>
    <property type="match status" value="1"/>
</dbReference>
<dbReference type="Pfam" id="PF16184">
    <property type="entry name" value="Cadherin_3"/>
    <property type="match status" value="11"/>
</dbReference>
<dbReference type="Pfam" id="PF03160">
    <property type="entry name" value="Calx-beta"/>
    <property type="match status" value="3"/>
</dbReference>
<dbReference type="Pfam" id="PF00093">
    <property type="entry name" value="VWC"/>
    <property type="match status" value="5"/>
</dbReference>
<dbReference type="SMART" id="SM00237">
    <property type="entry name" value="Calx_beta"/>
    <property type="match status" value="5"/>
</dbReference>
<dbReference type="SMART" id="SM00181">
    <property type="entry name" value="EGF"/>
    <property type="match status" value="10"/>
</dbReference>
<dbReference type="SMART" id="SM00261">
    <property type="entry name" value="FU"/>
    <property type="match status" value="14"/>
</dbReference>
<dbReference type="SMART" id="SM00214">
    <property type="entry name" value="VWC"/>
    <property type="match status" value="6"/>
</dbReference>
<dbReference type="SMART" id="SM00215">
    <property type="entry name" value="VWC_out"/>
    <property type="match status" value="3"/>
</dbReference>
<dbReference type="SUPFAM" id="SSF141072">
    <property type="entry name" value="CalX-like"/>
    <property type="match status" value="5"/>
</dbReference>
<dbReference type="SUPFAM" id="SSF57603">
    <property type="entry name" value="FnI-like domain"/>
    <property type="match status" value="6"/>
</dbReference>
<dbReference type="SUPFAM" id="SSF57184">
    <property type="entry name" value="Growth factor receptor domain"/>
    <property type="match status" value="5"/>
</dbReference>
<dbReference type="PROSITE" id="PS51854">
    <property type="entry name" value="CSPG"/>
    <property type="match status" value="12"/>
</dbReference>
<dbReference type="PROSITE" id="PS01208">
    <property type="entry name" value="VWFC_1"/>
    <property type="match status" value="6"/>
</dbReference>
<dbReference type="PROSITE" id="PS50184">
    <property type="entry name" value="VWFC_2"/>
    <property type="match status" value="6"/>
</dbReference>